<accession>B1LLP1</accession>
<reference key="1">
    <citation type="journal article" date="2008" name="J. Bacteriol.">
        <title>Insights into the environmental resistance gene pool from the genome sequence of the multidrug-resistant environmental isolate Escherichia coli SMS-3-5.</title>
        <authorList>
            <person name="Fricke W.F."/>
            <person name="Wright M.S."/>
            <person name="Lindell A.H."/>
            <person name="Harkins D.M."/>
            <person name="Baker-Austin C."/>
            <person name="Ravel J."/>
            <person name="Stepanauskas R."/>
        </authorList>
    </citation>
    <scope>NUCLEOTIDE SEQUENCE [LARGE SCALE GENOMIC DNA]</scope>
    <source>
        <strain>SMS-3-5 / SECEC</strain>
    </source>
</reference>
<name>NUOA_ECOSM</name>
<organism>
    <name type="scientific">Escherichia coli (strain SMS-3-5 / SECEC)</name>
    <dbReference type="NCBI Taxonomy" id="439855"/>
    <lineage>
        <taxon>Bacteria</taxon>
        <taxon>Pseudomonadati</taxon>
        <taxon>Pseudomonadota</taxon>
        <taxon>Gammaproteobacteria</taxon>
        <taxon>Enterobacterales</taxon>
        <taxon>Enterobacteriaceae</taxon>
        <taxon>Escherichia</taxon>
    </lineage>
</organism>
<dbReference type="EC" id="7.1.1.-" evidence="1"/>
<dbReference type="EMBL" id="CP000970">
    <property type="protein sequence ID" value="ACB17650.1"/>
    <property type="molecule type" value="Genomic_DNA"/>
</dbReference>
<dbReference type="RefSeq" id="WP_000062997.1">
    <property type="nucleotide sequence ID" value="NC_010498.1"/>
</dbReference>
<dbReference type="SMR" id="B1LLP1"/>
<dbReference type="GeneID" id="93774886"/>
<dbReference type="KEGG" id="ecm:EcSMS35_2442"/>
<dbReference type="HOGENOM" id="CLU_119549_2_0_6"/>
<dbReference type="Proteomes" id="UP000007011">
    <property type="component" value="Chromosome"/>
</dbReference>
<dbReference type="GO" id="GO:0030964">
    <property type="term" value="C:NADH dehydrogenase complex"/>
    <property type="evidence" value="ECO:0007669"/>
    <property type="project" value="TreeGrafter"/>
</dbReference>
<dbReference type="GO" id="GO:0005886">
    <property type="term" value="C:plasma membrane"/>
    <property type="evidence" value="ECO:0007669"/>
    <property type="project" value="UniProtKB-SubCell"/>
</dbReference>
<dbReference type="GO" id="GO:0008137">
    <property type="term" value="F:NADH dehydrogenase (ubiquinone) activity"/>
    <property type="evidence" value="ECO:0007669"/>
    <property type="project" value="InterPro"/>
</dbReference>
<dbReference type="GO" id="GO:0050136">
    <property type="term" value="F:NADH:ubiquinone reductase (non-electrogenic) activity"/>
    <property type="evidence" value="ECO:0007669"/>
    <property type="project" value="UniProtKB-UniRule"/>
</dbReference>
<dbReference type="GO" id="GO:0048038">
    <property type="term" value="F:quinone binding"/>
    <property type="evidence" value="ECO:0007669"/>
    <property type="project" value="UniProtKB-KW"/>
</dbReference>
<dbReference type="FunFam" id="1.20.58.1610:FF:000003">
    <property type="entry name" value="NADH-quinone oxidoreductase subunit A"/>
    <property type="match status" value="1"/>
</dbReference>
<dbReference type="Gene3D" id="1.20.58.1610">
    <property type="entry name" value="NADH:ubiquinone/plastoquinone oxidoreductase, chain 3"/>
    <property type="match status" value="1"/>
</dbReference>
<dbReference type="HAMAP" id="MF_01394">
    <property type="entry name" value="NDH1_NuoA"/>
    <property type="match status" value="1"/>
</dbReference>
<dbReference type="InterPro" id="IPR023043">
    <property type="entry name" value="NAD(P)H_OxRDtase_bac/plastid"/>
</dbReference>
<dbReference type="InterPro" id="IPR000440">
    <property type="entry name" value="NADH_UbQ/plastoQ_OxRdtase_su3"/>
</dbReference>
<dbReference type="InterPro" id="IPR038430">
    <property type="entry name" value="NDAH_ubi_oxred_su3_sf"/>
</dbReference>
<dbReference type="PANTHER" id="PTHR11058:SF21">
    <property type="entry name" value="NADH-QUINONE OXIDOREDUCTASE SUBUNIT A"/>
    <property type="match status" value="1"/>
</dbReference>
<dbReference type="PANTHER" id="PTHR11058">
    <property type="entry name" value="NADH-UBIQUINONE OXIDOREDUCTASE CHAIN 3"/>
    <property type="match status" value="1"/>
</dbReference>
<dbReference type="Pfam" id="PF00507">
    <property type="entry name" value="Oxidored_q4"/>
    <property type="match status" value="1"/>
</dbReference>
<comment type="function">
    <text evidence="1">NDH-1 shuttles electrons from NADH, via FMN and iron-sulfur (Fe-S) centers, to quinones in the respiratory chain. The immediate electron acceptor for the enzyme in this species is believed to be ubiquinone. Couples the redox reaction to proton translocation (for every two electrons transferred, four hydrogen ions are translocated across the cytoplasmic membrane), and thus conserves the redox energy in a proton gradient.</text>
</comment>
<comment type="catalytic activity">
    <reaction evidence="1">
        <text>a quinone + NADH + 5 H(+)(in) = a quinol + NAD(+) + 4 H(+)(out)</text>
        <dbReference type="Rhea" id="RHEA:57888"/>
        <dbReference type="ChEBI" id="CHEBI:15378"/>
        <dbReference type="ChEBI" id="CHEBI:24646"/>
        <dbReference type="ChEBI" id="CHEBI:57540"/>
        <dbReference type="ChEBI" id="CHEBI:57945"/>
        <dbReference type="ChEBI" id="CHEBI:132124"/>
    </reaction>
</comment>
<comment type="subunit">
    <text evidence="1">NDH-1 is composed of 13 different subunits. Subunits NuoA, H, J, K, L, M, N constitute the membrane sector of the complex.</text>
</comment>
<comment type="subcellular location">
    <subcellularLocation>
        <location evidence="1">Cell inner membrane</location>
        <topology evidence="1">Multi-pass membrane protein</topology>
    </subcellularLocation>
</comment>
<comment type="similarity">
    <text evidence="1">Belongs to the complex I subunit 3 family.</text>
</comment>
<sequence length="147" mass="16457">MSMSTSTEVIAHHWAFAIFLIVAIGLCCLMLVGGWFLGGRARARSKNVPFESGIDSVGSARLRLSAKFYLVAMFFVIFDVEALYLFAWSTSIRESGWVGFVEAAIFIFVLLAGLVYLVRIGALDWTPARSRRERMNPETNSIANRQR</sequence>
<gene>
    <name evidence="1" type="primary">nuoA</name>
    <name type="ordered locus">EcSMS35_2442</name>
</gene>
<evidence type="ECO:0000255" key="1">
    <source>
        <dbReference type="HAMAP-Rule" id="MF_01394"/>
    </source>
</evidence>
<proteinExistence type="inferred from homology"/>
<protein>
    <recommendedName>
        <fullName evidence="1">NADH-quinone oxidoreductase subunit A</fullName>
        <ecNumber evidence="1">7.1.1.-</ecNumber>
    </recommendedName>
    <alternativeName>
        <fullName evidence="1">NADH dehydrogenase I subunit A</fullName>
    </alternativeName>
    <alternativeName>
        <fullName evidence="1">NDH-1 subunit A</fullName>
    </alternativeName>
    <alternativeName>
        <fullName evidence="1">NUO1</fullName>
    </alternativeName>
</protein>
<feature type="chain" id="PRO_0000362680" description="NADH-quinone oxidoreductase subunit A">
    <location>
        <begin position="1"/>
        <end position="147"/>
    </location>
</feature>
<feature type="transmembrane region" description="Helical" evidence="1">
    <location>
        <begin position="16"/>
        <end position="36"/>
    </location>
</feature>
<feature type="transmembrane region" description="Helical" evidence="1">
    <location>
        <begin position="68"/>
        <end position="88"/>
    </location>
</feature>
<feature type="transmembrane region" description="Helical" evidence="1">
    <location>
        <begin position="98"/>
        <end position="118"/>
    </location>
</feature>
<keyword id="KW-0997">Cell inner membrane</keyword>
<keyword id="KW-1003">Cell membrane</keyword>
<keyword id="KW-0472">Membrane</keyword>
<keyword id="KW-0520">NAD</keyword>
<keyword id="KW-0874">Quinone</keyword>
<keyword id="KW-1278">Translocase</keyword>
<keyword id="KW-0812">Transmembrane</keyword>
<keyword id="KW-1133">Transmembrane helix</keyword>
<keyword id="KW-0813">Transport</keyword>
<keyword id="KW-0830">Ubiquinone</keyword>